<organismHost>
    <name type="scientific">Mycobacterium</name>
    <dbReference type="NCBI Taxonomy" id="1763"/>
</organismHost>
<sequence>MRFKAKCSGCSTEFKAETRKTFGTSIRIHEVMTGHTVKVKQEV</sequence>
<accession>Q05290</accession>
<feature type="chain" id="PRO_0000164818" description="Gene 75 protein">
    <location>
        <begin position="1"/>
        <end position="43"/>
    </location>
</feature>
<reference key="1">
    <citation type="journal article" date="1993" name="Mol. Microbiol.">
        <title>DNA sequence, structure and gene expression of mycobacteriophage L5: a phage system for mycobacterial genetics.</title>
        <authorList>
            <person name="Hatfull G.F."/>
            <person name="Sarkis G.J."/>
        </authorList>
    </citation>
    <scope>NUCLEOTIDE SEQUENCE [LARGE SCALE GENOMIC DNA]</scope>
</reference>
<organism>
    <name type="scientific">Mycobacterium phage L5</name>
    <name type="common">Mycobacteriophage L5</name>
    <dbReference type="NCBI Taxonomy" id="31757"/>
    <lineage>
        <taxon>Viruses</taxon>
        <taxon>Duplodnaviria</taxon>
        <taxon>Heunggongvirae</taxon>
        <taxon>Uroviricota</taxon>
        <taxon>Caudoviricetes</taxon>
        <taxon>Fromanvirus</taxon>
    </lineage>
</organism>
<gene>
    <name type="primary">75</name>
</gene>
<protein>
    <recommendedName>
        <fullName>Gene 75 protein</fullName>
    </recommendedName>
    <alternativeName>
        <fullName>Gp75</fullName>
    </alternativeName>
</protein>
<keyword id="KW-1185">Reference proteome</keyword>
<proteinExistence type="predicted"/>
<name>VG75_BPML5</name>
<dbReference type="EMBL" id="Z18946">
    <property type="protein sequence ID" value="CAA79451.1"/>
    <property type="molecule type" value="Genomic_DNA"/>
</dbReference>
<dbReference type="PIR" id="S31020">
    <property type="entry name" value="S31020"/>
</dbReference>
<dbReference type="RefSeq" id="NP_039739.1">
    <property type="nucleotide sequence ID" value="NC_001335.1"/>
</dbReference>
<dbReference type="GeneID" id="2942944"/>
<dbReference type="KEGG" id="vg:2942944"/>
<dbReference type="OrthoDB" id="27970at10239"/>
<dbReference type="Proteomes" id="UP000002123">
    <property type="component" value="Genome"/>
</dbReference>